<evidence type="ECO:0000255" key="1">
    <source>
        <dbReference type="HAMAP-Rule" id="MF_00013"/>
    </source>
</evidence>
<evidence type="ECO:0000255" key="2">
    <source>
        <dbReference type="PROSITE-ProRule" id="PRU01067"/>
    </source>
</evidence>
<comment type="function">
    <text evidence="1">Catalyzes the transfer of endogenously produced octanoic acid from octanoyl-acyl-carrier-protein onto the lipoyl domains of lipoate-dependent enzymes. Lipoyl-ACP can also act as a substrate although octanoyl-ACP is likely to be the physiological substrate.</text>
</comment>
<comment type="catalytic activity">
    <reaction evidence="1">
        <text>octanoyl-[ACP] + L-lysyl-[protein] = N(6)-octanoyl-L-lysyl-[protein] + holo-[ACP] + H(+)</text>
        <dbReference type="Rhea" id="RHEA:17665"/>
        <dbReference type="Rhea" id="RHEA-COMP:9636"/>
        <dbReference type="Rhea" id="RHEA-COMP:9685"/>
        <dbReference type="Rhea" id="RHEA-COMP:9752"/>
        <dbReference type="Rhea" id="RHEA-COMP:9928"/>
        <dbReference type="ChEBI" id="CHEBI:15378"/>
        <dbReference type="ChEBI" id="CHEBI:29969"/>
        <dbReference type="ChEBI" id="CHEBI:64479"/>
        <dbReference type="ChEBI" id="CHEBI:78463"/>
        <dbReference type="ChEBI" id="CHEBI:78809"/>
        <dbReference type="EC" id="2.3.1.181"/>
    </reaction>
</comment>
<comment type="pathway">
    <text evidence="1">Protein modification; protein lipoylation via endogenous pathway; protein N(6)-(lipoyl)lysine from octanoyl-[acyl-carrier-protein]: step 1/2.</text>
</comment>
<comment type="subcellular location">
    <subcellularLocation>
        <location evidence="1">Cytoplasm</location>
    </subcellularLocation>
</comment>
<comment type="miscellaneous">
    <text evidence="1">In the reaction, the free carboxyl group of octanoic acid is attached via an amide linkage to the epsilon-amino group of a specific lysine residue of lipoyl domains of lipoate-dependent enzymes.</text>
</comment>
<comment type="similarity">
    <text evidence="1">Belongs to the LipB family.</text>
</comment>
<keyword id="KW-0012">Acyltransferase</keyword>
<keyword id="KW-0963">Cytoplasm</keyword>
<keyword id="KW-0808">Transferase</keyword>
<proteinExistence type="inferred from homology"/>
<dbReference type="EC" id="2.3.1.181" evidence="1"/>
<dbReference type="EMBL" id="CU207366">
    <property type="protein sequence ID" value="CAL67872.1"/>
    <property type="molecule type" value="Genomic_DNA"/>
</dbReference>
<dbReference type="RefSeq" id="WP_011710773.1">
    <property type="nucleotide sequence ID" value="NC_008571.1"/>
</dbReference>
<dbReference type="SMR" id="A0M5H7"/>
<dbReference type="STRING" id="411154.GFO_2925"/>
<dbReference type="KEGG" id="gfo:GFO_2925"/>
<dbReference type="eggNOG" id="COG0321">
    <property type="taxonomic scope" value="Bacteria"/>
</dbReference>
<dbReference type="HOGENOM" id="CLU_035168_1_3_10"/>
<dbReference type="OrthoDB" id="9787061at2"/>
<dbReference type="UniPathway" id="UPA00538">
    <property type="reaction ID" value="UER00592"/>
</dbReference>
<dbReference type="Proteomes" id="UP000000755">
    <property type="component" value="Chromosome"/>
</dbReference>
<dbReference type="GO" id="GO:0005737">
    <property type="term" value="C:cytoplasm"/>
    <property type="evidence" value="ECO:0007669"/>
    <property type="project" value="UniProtKB-SubCell"/>
</dbReference>
<dbReference type="GO" id="GO:0033819">
    <property type="term" value="F:lipoyl(octanoyl) transferase activity"/>
    <property type="evidence" value="ECO:0007669"/>
    <property type="project" value="UniProtKB-EC"/>
</dbReference>
<dbReference type="GO" id="GO:0036211">
    <property type="term" value="P:protein modification process"/>
    <property type="evidence" value="ECO:0007669"/>
    <property type="project" value="InterPro"/>
</dbReference>
<dbReference type="CDD" id="cd16444">
    <property type="entry name" value="LipB"/>
    <property type="match status" value="1"/>
</dbReference>
<dbReference type="FunFam" id="3.30.930.10:FF:000035">
    <property type="entry name" value="Putative lipoyltransferase 2, mitochondrial"/>
    <property type="match status" value="1"/>
</dbReference>
<dbReference type="Gene3D" id="3.30.930.10">
    <property type="entry name" value="Bira Bifunctional Protein, Domain 2"/>
    <property type="match status" value="1"/>
</dbReference>
<dbReference type="HAMAP" id="MF_00013">
    <property type="entry name" value="LipB"/>
    <property type="match status" value="1"/>
</dbReference>
<dbReference type="InterPro" id="IPR045864">
    <property type="entry name" value="aa-tRNA-synth_II/BPL/LPL"/>
</dbReference>
<dbReference type="InterPro" id="IPR004143">
    <property type="entry name" value="BPL_LPL_catalytic"/>
</dbReference>
<dbReference type="InterPro" id="IPR000544">
    <property type="entry name" value="Octanoyltransferase"/>
</dbReference>
<dbReference type="InterPro" id="IPR020605">
    <property type="entry name" value="Octanoyltransferase_CS"/>
</dbReference>
<dbReference type="NCBIfam" id="TIGR00214">
    <property type="entry name" value="lipB"/>
    <property type="match status" value="1"/>
</dbReference>
<dbReference type="NCBIfam" id="NF010925">
    <property type="entry name" value="PRK14345.1"/>
    <property type="match status" value="1"/>
</dbReference>
<dbReference type="PANTHER" id="PTHR10993">
    <property type="entry name" value="OCTANOYLTRANSFERASE"/>
    <property type="match status" value="1"/>
</dbReference>
<dbReference type="PANTHER" id="PTHR10993:SF12">
    <property type="entry name" value="OCTANOYLTRANSFERASE"/>
    <property type="match status" value="1"/>
</dbReference>
<dbReference type="Pfam" id="PF21948">
    <property type="entry name" value="LplA-B_cat"/>
    <property type="match status" value="1"/>
</dbReference>
<dbReference type="PIRSF" id="PIRSF016262">
    <property type="entry name" value="LPLase"/>
    <property type="match status" value="1"/>
</dbReference>
<dbReference type="SUPFAM" id="SSF55681">
    <property type="entry name" value="Class II aaRS and biotin synthetases"/>
    <property type="match status" value="1"/>
</dbReference>
<dbReference type="PROSITE" id="PS51733">
    <property type="entry name" value="BPL_LPL_CATALYTIC"/>
    <property type="match status" value="1"/>
</dbReference>
<dbReference type="PROSITE" id="PS01313">
    <property type="entry name" value="LIPB"/>
    <property type="match status" value="1"/>
</dbReference>
<name>LIPB_CHRFK</name>
<reference key="1">
    <citation type="journal article" date="2006" name="Environ. Microbiol.">
        <title>Whole genome analysis of the marine Bacteroidetes'Gramella forsetii' reveals adaptations to degradation of polymeric organic matter.</title>
        <authorList>
            <person name="Bauer M."/>
            <person name="Kube M."/>
            <person name="Teeling H."/>
            <person name="Richter M."/>
            <person name="Lombardot T."/>
            <person name="Allers E."/>
            <person name="Wuerdemann C.A."/>
            <person name="Quast C."/>
            <person name="Kuhl H."/>
            <person name="Knaust F."/>
            <person name="Woebken D."/>
            <person name="Bischof K."/>
            <person name="Mussmann M."/>
            <person name="Choudhuri J.V."/>
            <person name="Meyer F."/>
            <person name="Reinhardt R."/>
            <person name="Amann R.I."/>
            <person name="Gloeckner F.O."/>
        </authorList>
    </citation>
    <scope>NUCLEOTIDE SEQUENCE [LARGE SCALE GENOMIC DNA]</scope>
    <source>
        <strain>DSM 17595 / CGMCC 1.15422 / KT0803</strain>
    </source>
</reference>
<accession>A0M5H7</accession>
<protein>
    <recommendedName>
        <fullName evidence="1">Octanoyltransferase</fullName>
        <ecNumber evidence="1">2.3.1.181</ecNumber>
    </recommendedName>
    <alternativeName>
        <fullName evidence="1">Lipoate-protein ligase B</fullName>
    </alternativeName>
    <alternativeName>
        <fullName evidence="1">Lipoyl/octanoyl transferase</fullName>
    </alternativeName>
    <alternativeName>
        <fullName evidence="1">Octanoyl-[acyl-carrier-protein]-protein N-octanoyltransferase</fullName>
    </alternativeName>
</protein>
<organism>
    <name type="scientific">Christiangramia forsetii (strain DSM 17595 / CGMCC 1.15422 / KT0803)</name>
    <name type="common">Gramella forsetii</name>
    <dbReference type="NCBI Taxonomy" id="411154"/>
    <lineage>
        <taxon>Bacteria</taxon>
        <taxon>Pseudomonadati</taxon>
        <taxon>Bacteroidota</taxon>
        <taxon>Flavobacteriia</taxon>
        <taxon>Flavobacteriales</taxon>
        <taxon>Flavobacteriaceae</taxon>
        <taxon>Christiangramia</taxon>
    </lineage>
</organism>
<sequence length="234" mass="26865">MNKEVEVRNLGIKDYKETWDYQENIFKETVDLKIKNRREGTEIPTRNYFLFVEHPHVYTLGKSGDAENLLISEKELKAKNATFYKINRGGDITYHGPGQIVGYPILDLDNFFTDIHKYLRLLEEAVILTLSEYGLKSERSPGETGVWLDVGTPFARKICAMGVRASRWVTMHGFALNVNADLGYFDNIIPCGIKGKAVTSLNVELGQKEINLEEVQEKLLKHFQELFQAELKYQ</sequence>
<feature type="chain" id="PRO_0000321635" description="Octanoyltransferase">
    <location>
        <begin position="1"/>
        <end position="234"/>
    </location>
</feature>
<feature type="domain" description="BPL/LPL catalytic" evidence="2">
    <location>
        <begin position="43"/>
        <end position="231"/>
    </location>
</feature>
<feature type="active site" description="Acyl-thioester intermediate" evidence="1">
    <location>
        <position position="191"/>
    </location>
</feature>
<feature type="binding site" evidence="1">
    <location>
        <begin position="88"/>
        <end position="95"/>
    </location>
    <ligand>
        <name>substrate</name>
    </ligand>
</feature>
<feature type="binding site" evidence="1">
    <location>
        <begin position="160"/>
        <end position="162"/>
    </location>
    <ligand>
        <name>substrate</name>
    </ligand>
</feature>
<feature type="binding site" evidence="1">
    <location>
        <begin position="173"/>
        <end position="175"/>
    </location>
    <ligand>
        <name>substrate</name>
    </ligand>
</feature>
<feature type="site" description="Lowers pKa of active site Cys" evidence="1">
    <location>
        <position position="157"/>
    </location>
</feature>
<gene>
    <name evidence="1" type="primary">lipB</name>
    <name type="ordered locus">GFO_2925</name>
</gene>